<dbReference type="EMBL" id="U66712">
    <property type="protein sequence ID" value="AAB63566.1"/>
    <property type="molecule type" value="Genomic_RNA"/>
</dbReference>
<dbReference type="RefSeq" id="NP_620539.1">
    <property type="nucleotide sequence ID" value="NC_003769.1"/>
</dbReference>
<dbReference type="GeneID" id="991202"/>
<dbReference type="KEGG" id="vg:991202"/>
<dbReference type="Proteomes" id="UP000000348">
    <property type="component" value="Genome"/>
</dbReference>
<proteinExistence type="predicted"/>
<reference key="1">
    <citation type="journal article" date="1997" name="Arch. Virol.">
        <title>Rice ragged stunt oryzavirus genome segments S7 and S10 encode non-structural proteins of M(r) 68,025 (Pns7) and M(r) 32,364 (Pns10).</title>
        <authorList>
            <person name="Upadhyaya N.M."/>
            <person name="Ramm K."/>
            <person name="Gellatly J.A."/>
            <person name="Li Z."/>
            <person name="Kositratana W."/>
            <person name="Waterhouse P.M."/>
        </authorList>
    </citation>
    <scope>NUCLEOTIDE SEQUENCE [GENOMIC RNA]</scope>
</reference>
<protein>
    <recommendedName>
        <fullName>Non-structural protein VP10</fullName>
    </recommendedName>
</protein>
<accession>O41252</accession>
<sequence>MPFVQFPNLFEISKFARQGKTVSELKCEVWTDLLSYLRTGLPTGLLSDFAEHHELNQLQAFTAVQFDEPCFVLPARAAIIVYCPEQDDMLSGVFEVDATGKRTFVRTSNTDIIGSAKSDVSGGKQIQSVGVAQGLETVMQMMDYILIQFHVQFGSFTDIGHFGMMRDAIQLYGTCACPFLLSLARFSTALSYLNAKLPSIVGLHYSGEPTTLGGIITRGVNLSAREAYFSKKYDPAQSLVASAFFTVKTSASGATVIEKMSSDIGLVYHMNRAAAVKVVSSRIGRLGEVANFGDDAE</sequence>
<organismHost>
    <name type="scientific">Oryza latifolia</name>
    <dbReference type="NCBI Taxonomy" id="4534"/>
</organismHost>
<organismHost>
    <name type="scientific">Oryza nivara</name>
    <name type="common">Indian wild rice</name>
    <name type="synonym">Oryza sativa f. spontanea</name>
    <dbReference type="NCBI Taxonomy" id="4536"/>
</organismHost>
<organismHost>
    <name type="scientific">Oryza rufipogon</name>
    <name type="common">Brownbeard rice</name>
    <name type="synonym">Asian wild rice</name>
    <dbReference type="NCBI Taxonomy" id="4529"/>
</organismHost>
<organism>
    <name type="scientific">Rice ragged stunt virus (isolate Thailand)</name>
    <name type="common">RRSV</name>
    <dbReference type="NCBI Taxonomy" id="649603"/>
    <lineage>
        <taxon>Viruses</taxon>
        <taxon>Riboviria</taxon>
        <taxon>Orthornavirae</taxon>
        <taxon>Duplornaviricota</taxon>
        <taxon>Resentoviricetes</taxon>
        <taxon>Reovirales</taxon>
        <taxon>Spinareoviridae</taxon>
        <taxon>Oryzavirus</taxon>
        <taxon>Rice ragged stunt virus</taxon>
    </lineage>
</organism>
<keyword id="KW-1185">Reference proteome</keyword>
<name>VP10_RRSVT</name>
<feature type="chain" id="PRO_0000403641" description="Non-structural protein VP10">
    <location>
        <begin position="1"/>
        <end position="297"/>
    </location>
</feature>